<dbReference type="EC" id="3.6.5.n1" evidence="1"/>
<dbReference type="EMBL" id="CP001013">
    <property type="protein sequence ID" value="ACB32876.1"/>
    <property type="molecule type" value="Genomic_DNA"/>
</dbReference>
<dbReference type="RefSeq" id="WP_012345638.1">
    <property type="nucleotide sequence ID" value="NC_010524.1"/>
</dbReference>
<dbReference type="SMR" id="B1XZN0"/>
<dbReference type="STRING" id="395495.Lcho_0601"/>
<dbReference type="KEGG" id="lch:Lcho_0601"/>
<dbReference type="eggNOG" id="COG0481">
    <property type="taxonomic scope" value="Bacteria"/>
</dbReference>
<dbReference type="HOGENOM" id="CLU_009995_3_3_4"/>
<dbReference type="OrthoDB" id="9801472at2"/>
<dbReference type="Proteomes" id="UP000001693">
    <property type="component" value="Chromosome"/>
</dbReference>
<dbReference type="GO" id="GO:0005886">
    <property type="term" value="C:plasma membrane"/>
    <property type="evidence" value="ECO:0007669"/>
    <property type="project" value="UniProtKB-SubCell"/>
</dbReference>
<dbReference type="GO" id="GO:0005525">
    <property type="term" value="F:GTP binding"/>
    <property type="evidence" value="ECO:0007669"/>
    <property type="project" value="UniProtKB-UniRule"/>
</dbReference>
<dbReference type="GO" id="GO:0003924">
    <property type="term" value="F:GTPase activity"/>
    <property type="evidence" value="ECO:0007669"/>
    <property type="project" value="UniProtKB-UniRule"/>
</dbReference>
<dbReference type="GO" id="GO:0097216">
    <property type="term" value="F:guanosine tetraphosphate binding"/>
    <property type="evidence" value="ECO:0007669"/>
    <property type="project" value="UniProtKB-ARBA"/>
</dbReference>
<dbReference type="GO" id="GO:0043022">
    <property type="term" value="F:ribosome binding"/>
    <property type="evidence" value="ECO:0007669"/>
    <property type="project" value="UniProtKB-UniRule"/>
</dbReference>
<dbReference type="GO" id="GO:0003746">
    <property type="term" value="F:translation elongation factor activity"/>
    <property type="evidence" value="ECO:0007669"/>
    <property type="project" value="UniProtKB-UniRule"/>
</dbReference>
<dbReference type="GO" id="GO:0045727">
    <property type="term" value="P:positive regulation of translation"/>
    <property type="evidence" value="ECO:0007669"/>
    <property type="project" value="UniProtKB-UniRule"/>
</dbReference>
<dbReference type="CDD" id="cd16260">
    <property type="entry name" value="EF4_III"/>
    <property type="match status" value="1"/>
</dbReference>
<dbReference type="CDD" id="cd01890">
    <property type="entry name" value="LepA"/>
    <property type="match status" value="1"/>
</dbReference>
<dbReference type="CDD" id="cd03709">
    <property type="entry name" value="lepA_C"/>
    <property type="match status" value="1"/>
</dbReference>
<dbReference type="FunFam" id="3.40.50.300:FF:000078">
    <property type="entry name" value="Elongation factor 4"/>
    <property type="match status" value="1"/>
</dbReference>
<dbReference type="FunFam" id="2.40.30.10:FF:000015">
    <property type="entry name" value="Translation factor GUF1, mitochondrial"/>
    <property type="match status" value="1"/>
</dbReference>
<dbReference type="FunFam" id="3.30.70.240:FF:000007">
    <property type="entry name" value="Translation factor GUF1, mitochondrial"/>
    <property type="match status" value="1"/>
</dbReference>
<dbReference type="FunFam" id="3.30.70.2570:FF:000001">
    <property type="entry name" value="Translation factor GUF1, mitochondrial"/>
    <property type="match status" value="1"/>
</dbReference>
<dbReference type="FunFam" id="3.30.70.870:FF:000004">
    <property type="entry name" value="Translation factor GUF1, mitochondrial"/>
    <property type="match status" value="1"/>
</dbReference>
<dbReference type="Gene3D" id="3.30.70.240">
    <property type="match status" value="1"/>
</dbReference>
<dbReference type="Gene3D" id="3.30.70.2570">
    <property type="entry name" value="Elongation factor 4, C-terminal domain"/>
    <property type="match status" value="1"/>
</dbReference>
<dbReference type="Gene3D" id="3.30.70.870">
    <property type="entry name" value="Elongation Factor G (Translational Gtpase), domain 3"/>
    <property type="match status" value="1"/>
</dbReference>
<dbReference type="Gene3D" id="3.40.50.300">
    <property type="entry name" value="P-loop containing nucleotide triphosphate hydrolases"/>
    <property type="match status" value="1"/>
</dbReference>
<dbReference type="Gene3D" id="2.40.30.10">
    <property type="entry name" value="Translation factors"/>
    <property type="match status" value="1"/>
</dbReference>
<dbReference type="HAMAP" id="MF_00071">
    <property type="entry name" value="LepA"/>
    <property type="match status" value="1"/>
</dbReference>
<dbReference type="InterPro" id="IPR006297">
    <property type="entry name" value="EF-4"/>
</dbReference>
<dbReference type="InterPro" id="IPR035647">
    <property type="entry name" value="EFG_III/V"/>
</dbReference>
<dbReference type="InterPro" id="IPR000640">
    <property type="entry name" value="EFG_V-like"/>
</dbReference>
<dbReference type="InterPro" id="IPR004161">
    <property type="entry name" value="EFTu-like_2"/>
</dbReference>
<dbReference type="InterPro" id="IPR031157">
    <property type="entry name" value="G_TR_CS"/>
</dbReference>
<dbReference type="InterPro" id="IPR038363">
    <property type="entry name" value="LepA_C_sf"/>
</dbReference>
<dbReference type="InterPro" id="IPR013842">
    <property type="entry name" value="LepA_CTD"/>
</dbReference>
<dbReference type="InterPro" id="IPR035654">
    <property type="entry name" value="LepA_IV"/>
</dbReference>
<dbReference type="InterPro" id="IPR027417">
    <property type="entry name" value="P-loop_NTPase"/>
</dbReference>
<dbReference type="InterPro" id="IPR005225">
    <property type="entry name" value="Small_GTP-bd"/>
</dbReference>
<dbReference type="InterPro" id="IPR000795">
    <property type="entry name" value="T_Tr_GTP-bd_dom"/>
</dbReference>
<dbReference type="InterPro" id="IPR009000">
    <property type="entry name" value="Transl_B-barrel_sf"/>
</dbReference>
<dbReference type="NCBIfam" id="TIGR01393">
    <property type="entry name" value="lepA"/>
    <property type="match status" value="1"/>
</dbReference>
<dbReference type="NCBIfam" id="TIGR00231">
    <property type="entry name" value="small_GTP"/>
    <property type="match status" value="1"/>
</dbReference>
<dbReference type="PANTHER" id="PTHR43512:SF4">
    <property type="entry name" value="TRANSLATION FACTOR GUF1 HOMOLOG, CHLOROPLASTIC"/>
    <property type="match status" value="1"/>
</dbReference>
<dbReference type="PANTHER" id="PTHR43512">
    <property type="entry name" value="TRANSLATION FACTOR GUF1-RELATED"/>
    <property type="match status" value="1"/>
</dbReference>
<dbReference type="Pfam" id="PF00679">
    <property type="entry name" value="EFG_C"/>
    <property type="match status" value="1"/>
</dbReference>
<dbReference type="Pfam" id="PF00009">
    <property type="entry name" value="GTP_EFTU"/>
    <property type="match status" value="1"/>
</dbReference>
<dbReference type="Pfam" id="PF03144">
    <property type="entry name" value="GTP_EFTU_D2"/>
    <property type="match status" value="1"/>
</dbReference>
<dbReference type="Pfam" id="PF06421">
    <property type="entry name" value="LepA_C"/>
    <property type="match status" value="1"/>
</dbReference>
<dbReference type="PRINTS" id="PR00315">
    <property type="entry name" value="ELONGATNFCT"/>
</dbReference>
<dbReference type="SMART" id="SM00838">
    <property type="entry name" value="EFG_C"/>
    <property type="match status" value="1"/>
</dbReference>
<dbReference type="SUPFAM" id="SSF54980">
    <property type="entry name" value="EF-G C-terminal domain-like"/>
    <property type="match status" value="2"/>
</dbReference>
<dbReference type="SUPFAM" id="SSF52540">
    <property type="entry name" value="P-loop containing nucleoside triphosphate hydrolases"/>
    <property type="match status" value="1"/>
</dbReference>
<dbReference type="SUPFAM" id="SSF50447">
    <property type="entry name" value="Translation proteins"/>
    <property type="match status" value="1"/>
</dbReference>
<dbReference type="PROSITE" id="PS00301">
    <property type="entry name" value="G_TR_1"/>
    <property type="match status" value="1"/>
</dbReference>
<dbReference type="PROSITE" id="PS51722">
    <property type="entry name" value="G_TR_2"/>
    <property type="match status" value="1"/>
</dbReference>
<feature type="chain" id="PRO_1000092416" description="Elongation factor 4">
    <location>
        <begin position="1"/>
        <end position="602"/>
    </location>
</feature>
<feature type="domain" description="tr-type G">
    <location>
        <begin position="2"/>
        <end position="184"/>
    </location>
</feature>
<feature type="binding site" evidence="1">
    <location>
        <begin position="14"/>
        <end position="19"/>
    </location>
    <ligand>
        <name>GTP</name>
        <dbReference type="ChEBI" id="CHEBI:37565"/>
    </ligand>
</feature>
<feature type="binding site" evidence="1">
    <location>
        <begin position="131"/>
        <end position="134"/>
    </location>
    <ligand>
        <name>GTP</name>
        <dbReference type="ChEBI" id="CHEBI:37565"/>
    </ligand>
</feature>
<evidence type="ECO:0000255" key="1">
    <source>
        <dbReference type="HAMAP-Rule" id="MF_00071"/>
    </source>
</evidence>
<accession>B1XZN0</accession>
<comment type="function">
    <text evidence="1">Required for accurate and efficient protein synthesis under certain stress conditions. May act as a fidelity factor of the translation reaction, by catalyzing a one-codon backward translocation of tRNAs on improperly translocated ribosomes. Back-translocation proceeds from a post-translocation (POST) complex to a pre-translocation (PRE) complex, thus giving elongation factor G a second chance to translocate the tRNAs correctly. Binds to ribosomes in a GTP-dependent manner.</text>
</comment>
<comment type="catalytic activity">
    <reaction evidence="1">
        <text>GTP + H2O = GDP + phosphate + H(+)</text>
        <dbReference type="Rhea" id="RHEA:19669"/>
        <dbReference type="ChEBI" id="CHEBI:15377"/>
        <dbReference type="ChEBI" id="CHEBI:15378"/>
        <dbReference type="ChEBI" id="CHEBI:37565"/>
        <dbReference type="ChEBI" id="CHEBI:43474"/>
        <dbReference type="ChEBI" id="CHEBI:58189"/>
        <dbReference type="EC" id="3.6.5.n1"/>
    </reaction>
</comment>
<comment type="subcellular location">
    <subcellularLocation>
        <location evidence="1">Cell inner membrane</location>
        <topology evidence="1">Peripheral membrane protein</topology>
        <orientation evidence="1">Cytoplasmic side</orientation>
    </subcellularLocation>
</comment>
<comment type="similarity">
    <text evidence="1">Belongs to the TRAFAC class translation factor GTPase superfamily. Classic translation factor GTPase family. LepA subfamily.</text>
</comment>
<name>LEPA_LEPCP</name>
<gene>
    <name evidence="1" type="primary">lepA</name>
    <name type="ordered locus">Lcho_0601</name>
</gene>
<proteinExistence type="inferred from homology"/>
<sequence>MDHIRNFSIIAHIDHGKSTLADRIIQRCGGLSDREMEAQVLDSMDIERERGITIKAQTAALQYKARDGQVYNLNLIDTPGHVDFSYEVSRSLSACEGALLVVDASQGVEAQTVANCYTALDLGVTVVPVLNKMDLPNADPDNAKAEIEDVIGIDADDAIPCSAKTGMGIDEILEAVIARMPPPKGNPDGPPRAMIVDSWFDNYVGVVMLVRVVDGTLGKGERIRMMATNSVYPIEHLGVFTPKSENREALKAGEVGFIICGIKELQAAKVGDTVTLEKKLPNNAGPAAEALPGFKEIQPQVFAGLYPTEASEYDQLRDALEKLKLNDSSLRYEPEVSQALGFGFRCGFLGLLHMEIVQERLEREFDQDLITTAPSVVYEVQLNGGDVIEVENPSKMPEVGKIAEIREPIVTVHLYMPQDYVGPVMTLANQKRGVQLNMAYHGRQVMLTYEMPLAEIVLDFFDKLKSVSRGYASMDYEFKEYRASDVVKVDILINGDRVDALSIIVHRAQSQYRGRAVAAKMREQIPRQMYDVAIQAAIGANIIARENIKALRKNVLAKCYGGDISRKRKLLEKQKAGKKRMKQIGSVEVPQEAFLAILQVED</sequence>
<organism>
    <name type="scientific">Leptothrix cholodnii (strain ATCC 51168 / LMG 8142 / SP-6)</name>
    <name type="common">Leptothrix discophora (strain SP-6)</name>
    <dbReference type="NCBI Taxonomy" id="395495"/>
    <lineage>
        <taxon>Bacteria</taxon>
        <taxon>Pseudomonadati</taxon>
        <taxon>Pseudomonadota</taxon>
        <taxon>Betaproteobacteria</taxon>
        <taxon>Burkholderiales</taxon>
        <taxon>Sphaerotilaceae</taxon>
        <taxon>Leptothrix</taxon>
    </lineage>
</organism>
<protein>
    <recommendedName>
        <fullName evidence="1">Elongation factor 4</fullName>
        <shortName evidence="1">EF-4</shortName>
        <ecNumber evidence="1">3.6.5.n1</ecNumber>
    </recommendedName>
    <alternativeName>
        <fullName evidence="1">Ribosomal back-translocase LepA</fullName>
    </alternativeName>
</protein>
<keyword id="KW-0997">Cell inner membrane</keyword>
<keyword id="KW-1003">Cell membrane</keyword>
<keyword id="KW-0342">GTP-binding</keyword>
<keyword id="KW-0378">Hydrolase</keyword>
<keyword id="KW-0472">Membrane</keyword>
<keyword id="KW-0547">Nucleotide-binding</keyword>
<keyword id="KW-0648">Protein biosynthesis</keyword>
<keyword id="KW-1185">Reference proteome</keyword>
<reference key="1">
    <citation type="submission" date="2008-03" db="EMBL/GenBank/DDBJ databases">
        <title>Complete sequence of Leptothrix cholodnii SP-6.</title>
        <authorList>
            <consortium name="US DOE Joint Genome Institute"/>
            <person name="Copeland A."/>
            <person name="Lucas S."/>
            <person name="Lapidus A."/>
            <person name="Glavina del Rio T."/>
            <person name="Dalin E."/>
            <person name="Tice H."/>
            <person name="Bruce D."/>
            <person name="Goodwin L."/>
            <person name="Pitluck S."/>
            <person name="Chertkov O."/>
            <person name="Brettin T."/>
            <person name="Detter J.C."/>
            <person name="Han C."/>
            <person name="Kuske C.R."/>
            <person name="Schmutz J."/>
            <person name="Larimer F."/>
            <person name="Land M."/>
            <person name="Hauser L."/>
            <person name="Kyrpides N."/>
            <person name="Lykidis A."/>
            <person name="Emerson D."/>
            <person name="Richardson P."/>
        </authorList>
    </citation>
    <scope>NUCLEOTIDE SEQUENCE [LARGE SCALE GENOMIC DNA]</scope>
    <source>
        <strain>ATCC 51168 / LMG 8142 / SP-6</strain>
    </source>
</reference>